<comment type="function">
    <text evidence="1">Functions in the biosynthesis of branched-chain amino acids. Catalyzes the dehydration of (2R,3R)-2,3-dihydroxy-3-methylpentanoate (2,3-dihydroxy-3-methylvalerate) into 2-oxo-3-methylpentanoate (2-oxo-3-methylvalerate) and of (2R)-2,3-dihydroxy-3-methylbutanoate (2,3-dihydroxyisovalerate) into 2-oxo-3-methylbutanoate (2-oxoisovalerate), the penultimate precursor to L-isoleucine and L-valine, respectively.</text>
</comment>
<comment type="catalytic activity">
    <reaction evidence="1">
        <text>(2R)-2,3-dihydroxy-3-methylbutanoate = 3-methyl-2-oxobutanoate + H2O</text>
        <dbReference type="Rhea" id="RHEA:24809"/>
        <dbReference type="ChEBI" id="CHEBI:11851"/>
        <dbReference type="ChEBI" id="CHEBI:15377"/>
        <dbReference type="ChEBI" id="CHEBI:49072"/>
        <dbReference type="EC" id="4.2.1.9"/>
    </reaction>
    <physiologicalReaction direction="left-to-right" evidence="1">
        <dbReference type="Rhea" id="RHEA:24810"/>
    </physiologicalReaction>
</comment>
<comment type="catalytic activity">
    <reaction evidence="1">
        <text>(2R,3R)-2,3-dihydroxy-3-methylpentanoate = (S)-3-methyl-2-oxopentanoate + H2O</text>
        <dbReference type="Rhea" id="RHEA:27694"/>
        <dbReference type="ChEBI" id="CHEBI:15377"/>
        <dbReference type="ChEBI" id="CHEBI:35146"/>
        <dbReference type="ChEBI" id="CHEBI:49258"/>
        <dbReference type="EC" id="4.2.1.9"/>
    </reaction>
    <physiologicalReaction direction="left-to-right" evidence="1">
        <dbReference type="Rhea" id="RHEA:27695"/>
    </physiologicalReaction>
</comment>
<comment type="cofactor">
    <cofactor evidence="1">
        <name>[2Fe-2S] cluster</name>
        <dbReference type="ChEBI" id="CHEBI:190135"/>
    </cofactor>
    <text evidence="1">Binds 1 [2Fe-2S] cluster per subunit. This cluster acts as a Lewis acid cofactor.</text>
</comment>
<comment type="cofactor">
    <cofactor evidence="1">
        <name>Mg(2+)</name>
        <dbReference type="ChEBI" id="CHEBI:18420"/>
    </cofactor>
</comment>
<comment type="pathway">
    <text evidence="1">Amino-acid biosynthesis; L-isoleucine biosynthesis; L-isoleucine from 2-oxobutanoate: step 3/4.</text>
</comment>
<comment type="pathway">
    <text evidence="1">Amino-acid biosynthesis; L-valine biosynthesis; L-valine from pyruvate: step 3/4.</text>
</comment>
<comment type="subunit">
    <text evidence="1">Homodimer.</text>
</comment>
<comment type="similarity">
    <text evidence="1">Belongs to the IlvD/Edd family.</text>
</comment>
<organism>
    <name type="scientific">Metallosphaera sedula (strain ATCC 51363 / DSM 5348 / JCM 9185 / NBRC 15509 / TH2)</name>
    <dbReference type="NCBI Taxonomy" id="399549"/>
    <lineage>
        <taxon>Archaea</taxon>
        <taxon>Thermoproteota</taxon>
        <taxon>Thermoprotei</taxon>
        <taxon>Sulfolobales</taxon>
        <taxon>Sulfolobaceae</taxon>
        <taxon>Metallosphaera</taxon>
    </lineage>
</organism>
<evidence type="ECO:0000255" key="1">
    <source>
        <dbReference type="HAMAP-Rule" id="MF_00012"/>
    </source>
</evidence>
<dbReference type="EC" id="4.2.1.9" evidence="1"/>
<dbReference type="EMBL" id="CP000682">
    <property type="protein sequence ID" value="ABP94886.1"/>
    <property type="molecule type" value="Genomic_DNA"/>
</dbReference>
<dbReference type="RefSeq" id="WP_012020673.1">
    <property type="nucleotide sequence ID" value="NC_009440.1"/>
</dbReference>
<dbReference type="SMR" id="A4YEN4"/>
<dbReference type="STRING" id="399549.Msed_0711"/>
<dbReference type="GeneID" id="91755164"/>
<dbReference type="KEGG" id="mse:Msed_0711"/>
<dbReference type="eggNOG" id="arCOG04045">
    <property type="taxonomic scope" value="Archaea"/>
</dbReference>
<dbReference type="HOGENOM" id="CLU_014271_4_2_2"/>
<dbReference type="UniPathway" id="UPA00047">
    <property type="reaction ID" value="UER00057"/>
</dbReference>
<dbReference type="UniPathway" id="UPA00049">
    <property type="reaction ID" value="UER00061"/>
</dbReference>
<dbReference type="Proteomes" id="UP000000242">
    <property type="component" value="Chromosome"/>
</dbReference>
<dbReference type="GO" id="GO:0051537">
    <property type="term" value="F:2 iron, 2 sulfur cluster binding"/>
    <property type="evidence" value="ECO:0007669"/>
    <property type="project" value="UniProtKB-UniRule"/>
</dbReference>
<dbReference type="GO" id="GO:0004160">
    <property type="term" value="F:dihydroxy-acid dehydratase activity"/>
    <property type="evidence" value="ECO:0007669"/>
    <property type="project" value="UniProtKB-UniRule"/>
</dbReference>
<dbReference type="GO" id="GO:0000287">
    <property type="term" value="F:magnesium ion binding"/>
    <property type="evidence" value="ECO:0007669"/>
    <property type="project" value="UniProtKB-UniRule"/>
</dbReference>
<dbReference type="GO" id="GO:0009097">
    <property type="term" value="P:isoleucine biosynthetic process"/>
    <property type="evidence" value="ECO:0007669"/>
    <property type="project" value="UniProtKB-UniRule"/>
</dbReference>
<dbReference type="GO" id="GO:0009099">
    <property type="term" value="P:L-valine biosynthetic process"/>
    <property type="evidence" value="ECO:0007669"/>
    <property type="project" value="UniProtKB-UniRule"/>
</dbReference>
<dbReference type="FunFam" id="3.50.30.80:FF:000001">
    <property type="entry name" value="Dihydroxy-acid dehydratase"/>
    <property type="match status" value="1"/>
</dbReference>
<dbReference type="Gene3D" id="3.50.30.80">
    <property type="entry name" value="IlvD/EDD C-terminal domain-like"/>
    <property type="match status" value="1"/>
</dbReference>
<dbReference type="HAMAP" id="MF_00012">
    <property type="entry name" value="IlvD"/>
    <property type="match status" value="1"/>
</dbReference>
<dbReference type="InterPro" id="IPR050165">
    <property type="entry name" value="DHAD_IlvD/Edd"/>
</dbReference>
<dbReference type="InterPro" id="IPR042096">
    <property type="entry name" value="Dihydro-acid_dehy_C"/>
</dbReference>
<dbReference type="InterPro" id="IPR004404">
    <property type="entry name" value="DihydroxyA_deHydtase"/>
</dbReference>
<dbReference type="InterPro" id="IPR020558">
    <property type="entry name" value="DiOHA_6PGluconate_deHydtase_CS"/>
</dbReference>
<dbReference type="InterPro" id="IPR056740">
    <property type="entry name" value="ILV_EDD_C"/>
</dbReference>
<dbReference type="InterPro" id="IPR000581">
    <property type="entry name" value="ILV_EDD_N"/>
</dbReference>
<dbReference type="InterPro" id="IPR037237">
    <property type="entry name" value="IlvD/EDD_N"/>
</dbReference>
<dbReference type="NCBIfam" id="TIGR00110">
    <property type="entry name" value="ilvD"/>
    <property type="match status" value="1"/>
</dbReference>
<dbReference type="NCBIfam" id="NF002068">
    <property type="entry name" value="PRK00911.1"/>
    <property type="match status" value="1"/>
</dbReference>
<dbReference type="PANTHER" id="PTHR21000">
    <property type="entry name" value="DIHYDROXY-ACID DEHYDRATASE DAD"/>
    <property type="match status" value="1"/>
</dbReference>
<dbReference type="PANTHER" id="PTHR21000:SF5">
    <property type="entry name" value="DIHYDROXY-ACID DEHYDRATASE, MITOCHONDRIAL"/>
    <property type="match status" value="1"/>
</dbReference>
<dbReference type="Pfam" id="PF24877">
    <property type="entry name" value="ILV_EDD_C"/>
    <property type="match status" value="1"/>
</dbReference>
<dbReference type="Pfam" id="PF00920">
    <property type="entry name" value="ILVD_EDD_N"/>
    <property type="match status" value="1"/>
</dbReference>
<dbReference type="SUPFAM" id="SSF143975">
    <property type="entry name" value="IlvD/EDD N-terminal domain-like"/>
    <property type="match status" value="1"/>
</dbReference>
<dbReference type="SUPFAM" id="SSF52016">
    <property type="entry name" value="LeuD/IlvD-like"/>
    <property type="match status" value="1"/>
</dbReference>
<dbReference type="PROSITE" id="PS00887">
    <property type="entry name" value="ILVD_EDD_2"/>
    <property type="match status" value="1"/>
</dbReference>
<feature type="chain" id="PRO_0000321612" description="Dihydroxy-acid dehydratase">
    <location>
        <begin position="1"/>
        <end position="557"/>
    </location>
</feature>
<feature type="active site" description="Proton acceptor" evidence="1">
    <location>
        <position position="473"/>
    </location>
</feature>
<feature type="binding site" evidence="1">
    <location>
        <position position="50"/>
    </location>
    <ligand>
        <name>[2Fe-2S] cluster</name>
        <dbReference type="ChEBI" id="CHEBI:190135"/>
    </ligand>
</feature>
<feature type="binding site" evidence="1">
    <location>
        <position position="82"/>
    </location>
    <ligand>
        <name>Mg(2+)</name>
        <dbReference type="ChEBI" id="CHEBI:18420"/>
    </ligand>
</feature>
<feature type="binding site" evidence="1">
    <location>
        <position position="123"/>
    </location>
    <ligand>
        <name>[2Fe-2S] cluster</name>
        <dbReference type="ChEBI" id="CHEBI:190135"/>
    </ligand>
</feature>
<feature type="binding site" evidence="1">
    <location>
        <position position="124"/>
    </location>
    <ligand>
        <name>Mg(2+)</name>
        <dbReference type="ChEBI" id="CHEBI:18420"/>
    </ligand>
</feature>
<feature type="binding site" description="via carbamate group" evidence="1">
    <location>
        <position position="125"/>
    </location>
    <ligand>
        <name>Mg(2+)</name>
        <dbReference type="ChEBI" id="CHEBI:18420"/>
    </ligand>
</feature>
<feature type="binding site" evidence="1">
    <location>
        <position position="195"/>
    </location>
    <ligand>
        <name>[2Fe-2S] cluster</name>
        <dbReference type="ChEBI" id="CHEBI:190135"/>
    </ligand>
</feature>
<feature type="binding site" evidence="1">
    <location>
        <position position="447"/>
    </location>
    <ligand>
        <name>Mg(2+)</name>
        <dbReference type="ChEBI" id="CHEBI:18420"/>
    </ligand>
</feature>
<feature type="modified residue" description="N6-carboxylysine" evidence="1">
    <location>
        <position position="125"/>
    </location>
</feature>
<proteinExistence type="inferred from homology"/>
<gene>
    <name evidence="1" type="primary">ilvD</name>
    <name type="ordered locus">Msed_0711</name>
</gene>
<name>ILVD_METS5</name>
<accession>A4YEN4</accession>
<protein>
    <recommendedName>
        <fullName evidence="1">Dihydroxy-acid dehydratase</fullName>
        <shortName evidence="1">DAD</shortName>
        <ecNumber evidence="1">4.2.1.9</ecNumber>
    </recommendedName>
</protein>
<reference key="1">
    <citation type="journal article" date="2008" name="Appl. Environ. Microbiol.">
        <title>The genome sequence of the metal-mobilizing, extremely thermoacidophilic archaeon Metallosphaera sedula provides insights into bioleaching-associated metabolism.</title>
        <authorList>
            <person name="Auernik K.S."/>
            <person name="Maezato Y."/>
            <person name="Blum P.H."/>
            <person name="Kelly R.M."/>
        </authorList>
    </citation>
    <scope>NUCLEOTIDE SEQUENCE [LARGE SCALE GENOMIC DNA]</scope>
    <source>
        <strain>ATCC 51363 / DSM 5348 / JCM 9185 / NBRC 15509 / TH2</strain>
    </source>
</reference>
<keyword id="KW-0001">2Fe-2S</keyword>
<keyword id="KW-0028">Amino-acid biosynthesis</keyword>
<keyword id="KW-0100">Branched-chain amino acid biosynthesis</keyword>
<keyword id="KW-0408">Iron</keyword>
<keyword id="KW-0411">Iron-sulfur</keyword>
<keyword id="KW-0456">Lyase</keyword>
<keyword id="KW-0460">Magnesium</keyword>
<keyword id="KW-0479">Metal-binding</keyword>
<keyword id="KW-1185">Reference proteome</keyword>
<sequence>MYDKSRSNKVYGGYEKAPNRAFLKAMGLTDDDISKPLVGVAVAWNEAGPCNIHLLGLSQVVKEGIRELGGTPRTFTAPVLIDGIAMGSESMKYSLVSREVIANTVELTVNGHGYDGFVALGGCDKTQPGLMMSMARLNIPSVYMYGGTTLPGNFRGRDIAIGDVYEAVGAFSAGKITAEDLRIMEDNAIPGPGACGGLYTANTMAMLSEALGLSLPGSSAPPAVSSDRTKFAKETGRTLMKVMEIGLKPRDILTFEAFENGIALLMASGGSTNGVLHLLAIAHEAGVSLTLDDFDRISKKVPEIVNMKPGGDYVMADLYRVGGTPVILKKLLDRGLLHGDTITVTGKTMAQNLSEYKIPEFKHDHIVRDLSNPFLPSGGIRILKGSLAPEGSVVKLSASKIKYHRGPARVFNSEEEAFETVLKKKINEGDVVVIRYEGPKGGPGMREMLAVTSAIVGQGLGEKVALVTDGRFSGATRGLMVGHVAPEAAVGGPIALIRDGDTIVIDGEKGRLDVELSDQELKSRAKDWTPPEPRYKTGLLAQYAKLVTSSARGAVLV</sequence>